<evidence type="ECO:0000255" key="1">
    <source>
        <dbReference type="HAMAP-Rule" id="MF_01590"/>
    </source>
</evidence>
<dbReference type="EC" id="2.5.1.-" evidence="1"/>
<dbReference type="EMBL" id="CU928163">
    <property type="protein sequence ID" value="CAR13362.1"/>
    <property type="molecule type" value="Genomic_DNA"/>
</dbReference>
<dbReference type="RefSeq" id="WP_000564725.1">
    <property type="nucleotide sequence ID" value="NC_011751.1"/>
</dbReference>
<dbReference type="RefSeq" id="YP_002412891.1">
    <property type="nucleotide sequence ID" value="NC_011751.1"/>
</dbReference>
<dbReference type="SMR" id="B7NBM2"/>
<dbReference type="STRING" id="585056.ECUMN_2169"/>
<dbReference type="GeneID" id="75171943"/>
<dbReference type="KEGG" id="eum:ECUMN_2169"/>
<dbReference type="PATRIC" id="fig|585056.7.peg.2354"/>
<dbReference type="HOGENOM" id="CLU_052665_0_0_6"/>
<dbReference type="Proteomes" id="UP000007097">
    <property type="component" value="Chromosome"/>
</dbReference>
<dbReference type="GO" id="GO:0016765">
    <property type="term" value="F:transferase activity, transferring alkyl or aryl (other than methyl) groups"/>
    <property type="evidence" value="ECO:0007669"/>
    <property type="project" value="UniProtKB-UniRule"/>
</dbReference>
<dbReference type="GO" id="GO:0002098">
    <property type="term" value="P:tRNA wobble uridine modification"/>
    <property type="evidence" value="ECO:0007669"/>
    <property type="project" value="InterPro"/>
</dbReference>
<dbReference type="CDD" id="cd02440">
    <property type="entry name" value="AdoMet_MTases"/>
    <property type="match status" value="1"/>
</dbReference>
<dbReference type="FunFam" id="3.40.50.150:FF:000080">
    <property type="entry name" value="tRNA U34 carboxymethyltransferase"/>
    <property type="match status" value="1"/>
</dbReference>
<dbReference type="Gene3D" id="3.40.50.150">
    <property type="entry name" value="Vaccinia Virus protein VP39"/>
    <property type="match status" value="1"/>
</dbReference>
<dbReference type="HAMAP" id="MF_01590">
    <property type="entry name" value="tRNA_carboxymethyltr_CmoB"/>
    <property type="match status" value="1"/>
</dbReference>
<dbReference type="InterPro" id="IPR010017">
    <property type="entry name" value="CmoB"/>
</dbReference>
<dbReference type="InterPro" id="IPR027555">
    <property type="entry name" value="Mo5U34_MeTrfas-like"/>
</dbReference>
<dbReference type="InterPro" id="IPR029063">
    <property type="entry name" value="SAM-dependent_MTases_sf"/>
</dbReference>
<dbReference type="NCBIfam" id="NF011650">
    <property type="entry name" value="PRK15068.1"/>
    <property type="match status" value="1"/>
</dbReference>
<dbReference type="NCBIfam" id="TIGR00452">
    <property type="entry name" value="tRNA 5-methoxyuridine(34)/uridine 5-oxyacetic acid(34) synthase CmoB"/>
    <property type="match status" value="1"/>
</dbReference>
<dbReference type="PANTHER" id="PTHR43861">
    <property type="entry name" value="TRANS-ACONITATE 2-METHYLTRANSFERASE-RELATED"/>
    <property type="match status" value="1"/>
</dbReference>
<dbReference type="Pfam" id="PF08003">
    <property type="entry name" value="Methyltransf_9"/>
    <property type="match status" value="1"/>
</dbReference>
<dbReference type="SUPFAM" id="SSF53335">
    <property type="entry name" value="S-adenosyl-L-methionine-dependent methyltransferases"/>
    <property type="match status" value="1"/>
</dbReference>
<feature type="chain" id="PRO_1000201293" description="tRNA U34 carboxymethyltransferase">
    <location>
        <begin position="1"/>
        <end position="323"/>
    </location>
</feature>
<feature type="binding site" evidence="1">
    <location>
        <position position="91"/>
    </location>
    <ligand>
        <name>carboxy-S-adenosyl-L-methionine</name>
        <dbReference type="ChEBI" id="CHEBI:134278"/>
    </ligand>
</feature>
<feature type="binding site" evidence="1">
    <location>
        <position position="105"/>
    </location>
    <ligand>
        <name>carboxy-S-adenosyl-L-methionine</name>
        <dbReference type="ChEBI" id="CHEBI:134278"/>
    </ligand>
</feature>
<feature type="binding site" evidence="1">
    <location>
        <position position="110"/>
    </location>
    <ligand>
        <name>carboxy-S-adenosyl-L-methionine</name>
        <dbReference type="ChEBI" id="CHEBI:134278"/>
    </ligand>
</feature>
<feature type="binding site" evidence="1">
    <location>
        <position position="130"/>
    </location>
    <ligand>
        <name>carboxy-S-adenosyl-L-methionine</name>
        <dbReference type="ChEBI" id="CHEBI:134278"/>
    </ligand>
</feature>
<feature type="binding site" evidence="1">
    <location>
        <begin position="152"/>
        <end position="154"/>
    </location>
    <ligand>
        <name>carboxy-S-adenosyl-L-methionine</name>
        <dbReference type="ChEBI" id="CHEBI:134278"/>
    </ligand>
</feature>
<feature type="binding site" evidence="1">
    <location>
        <begin position="181"/>
        <end position="182"/>
    </location>
    <ligand>
        <name>carboxy-S-adenosyl-L-methionine</name>
        <dbReference type="ChEBI" id="CHEBI:134278"/>
    </ligand>
</feature>
<feature type="binding site" evidence="1">
    <location>
        <position position="196"/>
    </location>
    <ligand>
        <name>carboxy-S-adenosyl-L-methionine</name>
        <dbReference type="ChEBI" id="CHEBI:134278"/>
    </ligand>
</feature>
<feature type="binding site" evidence="1">
    <location>
        <position position="200"/>
    </location>
    <ligand>
        <name>carboxy-S-adenosyl-L-methionine</name>
        <dbReference type="ChEBI" id="CHEBI:134278"/>
    </ligand>
</feature>
<feature type="binding site" evidence="1">
    <location>
        <position position="315"/>
    </location>
    <ligand>
        <name>carboxy-S-adenosyl-L-methionine</name>
        <dbReference type="ChEBI" id="CHEBI:134278"/>
    </ligand>
</feature>
<proteinExistence type="inferred from homology"/>
<name>CMOB_ECOLU</name>
<accession>B7NBM2</accession>
<keyword id="KW-0808">Transferase</keyword>
<keyword id="KW-0819">tRNA processing</keyword>
<organism>
    <name type="scientific">Escherichia coli O17:K52:H18 (strain UMN026 / ExPEC)</name>
    <dbReference type="NCBI Taxonomy" id="585056"/>
    <lineage>
        <taxon>Bacteria</taxon>
        <taxon>Pseudomonadati</taxon>
        <taxon>Pseudomonadota</taxon>
        <taxon>Gammaproteobacteria</taxon>
        <taxon>Enterobacterales</taxon>
        <taxon>Enterobacteriaceae</taxon>
        <taxon>Escherichia</taxon>
    </lineage>
</organism>
<sequence>MIDFGNFYSLIAKNHLSHWLETLPAQIANWQREQQHGLFKQWSNAVEFLPEIKPYRLDLLHSVTAESEEPLSAGQIKRIETLMRNLMPWRKGPFSLYGVNIDTEWRSDWKWDRVLPHLSDLTGRTILDVGCGSGYHMWRMIGAGAHLAVGIDPTQLFLCQFEAVRKLLGNDQRAHLLPLGIEQLPALKAFDTVFSMGVLYHRRSPLEHLWQLKDQLVNEGELVLETLVIDGDENTVLVPGDRYAQMRNVYFIPSALALKNWLKKCGFVDIRIADVSVTTTEEQRRTEWMVTESLADFLDPHDPGKTVEGYPAPKRAVLIARKP</sequence>
<gene>
    <name evidence="1" type="primary">cmoB</name>
    <name type="ordered locus">ECUMN_2169</name>
</gene>
<protein>
    <recommendedName>
        <fullName evidence="1">tRNA U34 carboxymethyltransferase</fullName>
        <ecNumber evidence="1">2.5.1.-</ecNumber>
    </recommendedName>
</protein>
<comment type="function">
    <text evidence="1">Catalyzes carboxymethyl transfer from carboxy-S-adenosyl-L-methionine (Cx-SAM) to 5-hydroxyuridine (ho5U) to form 5-carboxymethoxyuridine (cmo5U) at position 34 in tRNAs.</text>
</comment>
<comment type="catalytic activity">
    <reaction evidence="1">
        <text>carboxy-S-adenosyl-L-methionine + 5-hydroxyuridine(34) in tRNA = 5-carboxymethoxyuridine(34) in tRNA + S-adenosyl-L-homocysteine + H(+)</text>
        <dbReference type="Rhea" id="RHEA:52848"/>
        <dbReference type="Rhea" id="RHEA-COMP:13381"/>
        <dbReference type="Rhea" id="RHEA-COMP:13383"/>
        <dbReference type="ChEBI" id="CHEBI:15378"/>
        <dbReference type="ChEBI" id="CHEBI:57856"/>
        <dbReference type="ChEBI" id="CHEBI:134278"/>
        <dbReference type="ChEBI" id="CHEBI:136877"/>
        <dbReference type="ChEBI" id="CHEBI:136879"/>
    </reaction>
</comment>
<comment type="subunit">
    <text evidence="1">Homotetramer.</text>
</comment>
<comment type="similarity">
    <text evidence="1">Belongs to the class I-like SAM-binding methyltransferase superfamily. CmoB family.</text>
</comment>
<reference key="1">
    <citation type="journal article" date="2009" name="PLoS Genet.">
        <title>Organised genome dynamics in the Escherichia coli species results in highly diverse adaptive paths.</title>
        <authorList>
            <person name="Touchon M."/>
            <person name="Hoede C."/>
            <person name="Tenaillon O."/>
            <person name="Barbe V."/>
            <person name="Baeriswyl S."/>
            <person name="Bidet P."/>
            <person name="Bingen E."/>
            <person name="Bonacorsi S."/>
            <person name="Bouchier C."/>
            <person name="Bouvet O."/>
            <person name="Calteau A."/>
            <person name="Chiapello H."/>
            <person name="Clermont O."/>
            <person name="Cruveiller S."/>
            <person name="Danchin A."/>
            <person name="Diard M."/>
            <person name="Dossat C."/>
            <person name="Karoui M.E."/>
            <person name="Frapy E."/>
            <person name="Garry L."/>
            <person name="Ghigo J.M."/>
            <person name="Gilles A.M."/>
            <person name="Johnson J."/>
            <person name="Le Bouguenec C."/>
            <person name="Lescat M."/>
            <person name="Mangenot S."/>
            <person name="Martinez-Jehanne V."/>
            <person name="Matic I."/>
            <person name="Nassif X."/>
            <person name="Oztas S."/>
            <person name="Petit M.A."/>
            <person name="Pichon C."/>
            <person name="Rouy Z."/>
            <person name="Ruf C.S."/>
            <person name="Schneider D."/>
            <person name="Tourret J."/>
            <person name="Vacherie B."/>
            <person name="Vallenet D."/>
            <person name="Medigue C."/>
            <person name="Rocha E.P.C."/>
            <person name="Denamur E."/>
        </authorList>
    </citation>
    <scope>NUCLEOTIDE SEQUENCE [LARGE SCALE GENOMIC DNA]</scope>
    <source>
        <strain>UMN026 / ExPEC</strain>
    </source>
</reference>